<sequence>MSWNHQSVEIAVRRTTVPSPNLPPGFDFTDPAIYAERLPVAEFAELRSAAPIWWNGQDPGKGGGFHDGGFWAITKLNDVKEISRHSDVFSSYENGVIPRFKNDIAREDIEVQRFVMLNMDAPHHTRLRKIISRGFTPRAVGRLHDELQERAQKIAAEAAAAGSGDFVEQVSCELPLQAIAGLLGVPQEDRGKLFHWSNEMTGNEDPEYAHIDPKASSAELIGYAMKMAEEKAKNPADDIVTQLIQADIDGEKLSDDEFGFFVVMLAVAGNETTRNSITQGMMAFAEHPDQWELYKKVRPETAADEIVRWATPVTAFQRTALRDYELSGVQIKKGQRVVMFYRSANFDEEVFQDPFTFNILRNPNPHVGFGGTGAHYCIGANLARMTINLIFNAVADHMPDLKPISAPERLRSGWLNGIKHWQVDYTGRCPVAH</sequence>
<evidence type="ECO:0000250" key="1">
    <source>
        <dbReference type="UniProtKB" id="P9WPP1"/>
    </source>
</evidence>
<evidence type="ECO:0000269" key="2">
    <source>
    </source>
</evidence>
<evidence type="ECO:0000303" key="3">
    <source>
    </source>
</evidence>
<evidence type="ECO:0000305" key="4"/>
<evidence type="ECO:0000305" key="5">
    <source>
    </source>
</evidence>
<reference key="1">
    <citation type="journal article" date="2003" name="Proc. Natl. Acad. Sci. U.S.A.">
        <title>The complete genome sequence of Mycobacterium bovis.</title>
        <authorList>
            <person name="Garnier T."/>
            <person name="Eiglmeier K."/>
            <person name="Camus J.-C."/>
            <person name="Medina N."/>
            <person name="Mansoor H."/>
            <person name="Pryor M."/>
            <person name="Duthoy S."/>
            <person name="Grondin S."/>
            <person name="Lacroix C."/>
            <person name="Monsempe C."/>
            <person name="Simon S."/>
            <person name="Harris B."/>
            <person name="Atkin R."/>
            <person name="Doggett J."/>
            <person name="Mayes R."/>
            <person name="Keating L."/>
            <person name="Wheeler P.R."/>
            <person name="Parkhill J."/>
            <person name="Barrell B.G."/>
            <person name="Cole S.T."/>
            <person name="Gordon S.V."/>
            <person name="Hewinson R.G."/>
        </authorList>
    </citation>
    <scope>NUCLEOTIDE SEQUENCE [LARGE SCALE GENOMIC DNA]</scope>
    <source>
        <strain>ATCC BAA-935 / AF2122/97</strain>
    </source>
</reference>
<reference key="2">
    <citation type="journal article" date="2017" name="Genome Announc.">
        <title>Updated reference genome sequence and annotation of Mycobacterium bovis AF2122/97.</title>
        <authorList>
            <person name="Malone K.M."/>
            <person name="Farrell D."/>
            <person name="Stuber T.P."/>
            <person name="Schubert O.T."/>
            <person name="Aebersold R."/>
            <person name="Robbe-Austerman S."/>
            <person name="Gordon S.V."/>
        </authorList>
    </citation>
    <scope>NUCLEOTIDE SEQUENCE [LARGE SCALE GENOMIC DNA]</scope>
    <scope>GENOME REANNOTATION</scope>
    <source>
        <strain>ATCC BAA-935 / AF2122/97</strain>
    </source>
</reference>
<reference key="3">
    <citation type="journal article" date="2009" name="J. Biol. Chem.">
        <title>Mycobacterial cytochrome p450 125 (cyp125) catalyzes the terminal hydroxylation of c27 steroids.</title>
        <authorList>
            <person name="Capyk J.K."/>
            <person name="Kalscheuer R."/>
            <person name="Stewart G.R."/>
            <person name="Liu J."/>
            <person name="Kwon H."/>
            <person name="Zhao R."/>
            <person name="Okamoto S."/>
            <person name="Jacobs W.R. Jr."/>
            <person name="Eltis L.D."/>
            <person name="Mohn W.W."/>
        </authorList>
    </citation>
    <scope>FUNCTION IN CHOLESTEROL CATABOLISM</scope>
    <scope>CATALYTIC ACTIVITY</scope>
    <scope>COFACTOR</scope>
    <scope>DISRUPTION PHENOTYPE</scope>
    <scope>SUBSTRATE SPECIFICITY</scope>
    <scope>PATHWAY</scope>
</reference>
<gene>
    <name type="primary">cyp125</name>
    <name type="ordered locus">BQ2027_MB3575C</name>
</gene>
<feature type="chain" id="PRO_0000052279" description="Steroid C26-monooxygenase">
    <location>
        <begin position="1"/>
        <end position="433"/>
    </location>
</feature>
<feature type="binding site" evidence="1">
    <location>
        <position position="202"/>
    </location>
    <ligand>
        <name>substrate</name>
    </ligand>
</feature>
<feature type="binding site" description="axial binding residue" evidence="1">
    <location>
        <position position="377"/>
    </location>
    <ligand>
        <name>heme</name>
        <dbReference type="ChEBI" id="CHEBI:30413"/>
    </ligand>
    <ligandPart>
        <name>Fe</name>
        <dbReference type="ChEBI" id="CHEBI:18248"/>
    </ligandPart>
</feature>
<comment type="function">
    <text evidence="2">Involved in the utilization of cholesterol as the sole carbon and energy source by degrading the side chain during infection. Primarily catalyzes the sequential oxidation of the terminal methyl of cholest-4-en-3-one into (25S)-26-hydroxycholest-4-en-3-one (alcohol), (25S)-26-oxocholest-4-en-3-one (aldehyde), to finally yield the carboxylic acid (25S)-3-oxocholest-4-en-26-oate. Also able to sequentially oxidize cholesterol itself, not only cholest-4-en-3-one.</text>
</comment>
<comment type="catalytic activity">
    <reaction evidence="1 5">
        <text>cholest-4-en-3-one + 6 reduced [2Fe-2S]-[ferredoxin] + 3 O2 + 5 H(+) = (25S)-3-oxocholest-4-en-26-oate + 6 oxidized [2Fe-2S]-[ferredoxin] + 4 H2O</text>
        <dbReference type="Rhea" id="RHEA:51564"/>
        <dbReference type="Rhea" id="RHEA-COMP:10000"/>
        <dbReference type="Rhea" id="RHEA-COMP:10001"/>
        <dbReference type="ChEBI" id="CHEBI:15377"/>
        <dbReference type="ChEBI" id="CHEBI:15378"/>
        <dbReference type="ChEBI" id="CHEBI:15379"/>
        <dbReference type="ChEBI" id="CHEBI:16175"/>
        <dbReference type="ChEBI" id="CHEBI:33737"/>
        <dbReference type="ChEBI" id="CHEBI:33738"/>
        <dbReference type="ChEBI" id="CHEBI:71541"/>
        <dbReference type="EC" id="1.14.15.29"/>
    </reaction>
</comment>
<comment type="cofactor">
    <cofactor evidence="2">
        <name>heme</name>
        <dbReference type="ChEBI" id="CHEBI:30413"/>
    </cofactor>
</comment>
<comment type="pathway">
    <text evidence="5">Steroid metabolism; cholesterol degradation.</text>
</comment>
<comment type="induction">
    <text evidence="1">By cholesterol.</text>
</comment>
<comment type="disruption phenotype">
    <text evidence="2">Cells lacking this genes can transform cholesterol but is unable to metabolize it sufficiently to support growth. 4-cholesten-3-one is accumulated when incubated in the presence of cholesterol.</text>
</comment>
<comment type="similarity">
    <text evidence="4">Belongs to the cytochrome P450 family.</text>
</comment>
<accession>P63710</accession>
<accession>A0A1R3Y4I9</accession>
<accession>P71856</accession>
<accession>X2BP97</accession>
<name>CP125_MYCBO</name>
<proteinExistence type="evidence at protein level"/>
<dbReference type="EC" id="1.14.15.29" evidence="1 5"/>
<dbReference type="EMBL" id="LT708304">
    <property type="protein sequence ID" value="SIU02202.1"/>
    <property type="molecule type" value="Genomic_DNA"/>
</dbReference>
<dbReference type="RefSeq" id="NP_857214.1">
    <property type="nucleotide sequence ID" value="NC_002945.3"/>
</dbReference>
<dbReference type="SMR" id="P63710"/>
<dbReference type="KEGG" id="mbo:BQ2027_MB3575C"/>
<dbReference type="PATRIC" id="fig|233413.5.peg.3918"/>
<dbReference type="UniPathway" id="UPA01058"/>
<dbReference type="Proteomes" id="UP000001419">
    <property type="component" value="Chromosome"/>
</dbReference>
<dbReference type="GO" id="GO:0036199">
    <property type="term" value="F:cholest-4-en-3-one 26-monooxygenase activity"/>
    <property type="evidence" value="ECO:0007669"/>
    <property type="project" value="UniProtKB-EC"/>
</dbReference>
<dbReference type="GO" id="GO:0020037">
    <property type="term" value="F:heme binding"/>
    <property type="evidence" value="ECO:0007669"/>
    <property type="project" value="InterPro"/>
</dbReference>
<dbReference type="GO" id="GO:0005506">
    <property type="term" value="F:iron ion binding"/>
    <property type="evidence" value="ECO:0007669"/>
    <property type="project" value="InterPro"/>
</dbReference>
<dbReference type="GO" id="GO:0008395">
    <property type="term" value="F:steroid hydroxylase activity"/>
    <property type="evidence" value="ECO:0007669"/>
    <property type="project" value="TreeGrafter"/>
</dbReference>
<dbReference type="GO" id="GO:0006707">
    <property type="term" value="P:cholesterol catabolic process"/>
    <property type="evidence" value="ECO:0007669"/>
    <property type="project" value="UniProtKB-UniPathway"/>
</dbReference>
<dbReference type="CDD" id="cd11033">
    <property type="entry name" value="CYP142-like"/>
    <property type="match status" value="1"/>
</dbReference>
<dbReference type="FunFam" id="1.10.630.10:FF:000103">
    <property type="entry name" value="Steroid C26-monooxygenase"/>
    <property type="match status" value="1"/>
</dbReference>
<dbReference type="Gene3D" id="1.10.630.10">
    <property type="entry name" value="Cytochrome P450"/>
    <property type="match status" value="1"/>
</dbReference>
<dbReference type="InterPro" id="IPR001128">
    <property type="entry name" value="Cyt_P450"/>
</dbReference>
<dbReference type="InterPro" id="IPR002397">
    <property type="entry name" value="Cyt_P450_B"/>
</dbReference>
<dbReference type="InterPro" id="IPR036396">
    <property type="entry name" value="Cyt_P450_sf"/>
</dbReference>
<dbReference type="PANTHER" id="PTHR46696:SF4">
    <property type="entry name" value="BIOTIN BIOSYNTHESIS CYTOCHROME P450"/>
    <property type="match status" value="1"/>
</dbReference>
<dbReference type="PANTHER" id="PTHR46696">
    <property type="entry name" value="P450, PUTATIVE (EUROFUNG)-RELATED"/>
    <property type="match status" value="1"/>
</dbReference>
<dbReference type="Pfam" id="PF00067">
    <property type="entry name" value="p450"/>
    <property type="match status" value="1"/>
</dbReference>
<dbReference type="PRINTS" id="PR00359">
    <property type="entry name" value="BP450"/>
</dbReference>
<dbReference type="SUPFAM" id="SSF48264">
    <property type="entry name" value="Cytochrome P450"/>
    <property type="match status" value="1"/>
</dbReference>
<keyword id="KW-0153">Cholesterol metabolism</keyword>
<keyword id="KW-0349">Heme</keyword>
<keyword id="KW-0408">Iron</keyword>
<keyword id="KW-0442">Lipid degradation</keyword>
<keyword id="KW-0443">Lipid metabolism</keyword>
<keyword id="KW-0479">Metal-binding</keyword>
<keyword id="KW-0503">Monooxygenase</keyword>
<keyword id="KW-0520">NAD</keyword>
<keyword id="KW-0560">Oxidoreductase</keyword>
<keyword id="KW-1185">Reference proteome</keyword>
<keyword id="KW-0753">Steroid metabolism</keyword>
<keyword id="KW-1207">Sterol metabolism</keyword>
<keyword id="KW-0843">Virulence</keyword>
<organism>
    <name type="scientific">Mycobacterium bovis (strain ATCC BAA-935 / AF2122/97)</name>
    <dbReference type="NCBI Taxonomy" id="233413"/>
    <lineage>
        <taxon>Bacteria</taxon>
        <taxon>Bacillati</taxon>
        <taxon>Actinomycetota</taxon>
        <taxon>Actinomycetes</taxon>
        <taxon>Mycobacteriales</taxon>
        <taxon>Mycobacteriaceae</taxon>
        <taxon>Mycobacterium</taxon>
        <taxon>Mycobacterium tuberculosis complex</taxon>
    </lineage>
</organism>
<protein>
    <recommendedName>
        <fullName evidence="3">Steroid C26-monooxygenase</fullName>
        <ecNumber evidence="1 5">1.14.15.29</ecNumber>
    </recommendedName>
    <alternativeName>
        <fullName evidence="3">Cholest-4-en-3-one 26-monooxygenase</fullName>
    </alternativeName>
    <alternativeName>
        <fullName evidence="1 5">Cholest-4-en-3-one C26-monooxygenase [(25S)-3-oxocholest-4-en-26-oate forming]</fullName>
    </alternativeName>
    <alternativeName>
        <fullName evidence="3">Cholesterol C26-monooxygenase</fullName>
    </alternativeName>
    <alternativeName>
        <fullName evidence="1 5">Cholesterol C26-monooxygenase [(25S)-3beta-hydroxycholest-5-en-26-oate forming]</fullName>
    </alternativeName>
    <alternativeName>
        <fullName evidence="3">Cytochrome P450 125</fullName>
    </alternativeName>
    <alternativeName>
        <fullName evidence="3">Steroid C27-monooxygenase</fullName>
    </alternativeName>
</protein>